<feature type="chain" id="PRO_0000162219" description="Pyruvate dehydrogenase E1 component subunit beta">
    <location>
        <begin position="1"/>
        <end position="331"/>
    </location>
</feature>
<feature type="binding site" evidence="2">
    <location>
        <position position="60"/>
    </location>
    <ligand>
        <name>thiamine diphosphate</name>
        <dbReference type="ChEBI" id="CHEBI:58937"/>
        <note>ligand shared with alpha subunit</note>
    </ligand>
</feature>
<feature type="binding site" evidence="2">
    <location>
        <position position="113"/>
    </location>
    <ligand>
        <name>K(+)</name>
        <dbReference type="ChEBI" id="CHEBI:29103"/>
        <note>structural</note>
    </ligand>
</feature>
<feature type="binding site" evidence="2">
    <location>
        <position position="161"/>
    </location>
    <ligand>
        <name>K(+)</name>
        <dbReference type="ChEBI" id="CHEBI:29103"/>
        <note>structural</note>
    </ligand>
</feature>
<feature type="binding site" evidence="2">
    <location>
        <position position="162"/>
    </location>
    <ligand>
        <name>K(+)</name>
        <dbReference type="ChEBI" id="CHEBI:29103"/>
        <note>structural</note>
    </ligand>
</feature>
<feature type="binding site" evidence="2">
    <location>
        <position position="164"/>
    </location>
    <ligand>
        <name>K(+)</name>
        <dbReference type="ChEBI" id="CHEBI:29103"/>
        <note>structural</note>
    </ligand>
</feature>
<feature type="binding site" evidence="2">
    <location>
        <position position="166"/>
    </location>
    <ligand>
        <name>K(+)</name>
        <dbReference type="ChEBI" id="CHEBI:29103"/>
        <note>structural</note>
    </ligand>
</feature>
<reference key="1">
    <citation type="journal article" date="1995" name="Plant Mol. Biol. Rep.">
        <title>Complete nucleotide sequence of the Porphyra purpurea chloroplast genome.</title>
        <authorList>
            <person name="Reith M.E."/>
            <person name="Munholland J."/>
        </authorList>
    </citation>
    <scope>NUCLEOTIDE SEQUENCE [LARGE SCALE GENOMIC DNA]</scope>
    <source>
        <strain>Avonport</strain>
    </source>
</reference>
<accession>P51266</accession>
<evidence type="ECO:0000250" key="1"/>
<evidence type="ECO:0000250" key="2">
    <source>
        <dbReference type="UniProtKB" id="P11177"/>
    </source>
</evidence>
<keyword id="KW-0150">Chloroplast</keyword>
<keyword id="KW-0479">Metal-binding</keyword>
<keyword id="KW-0560">Oxidoreductase</keyword>
<keyword id="KW-0934">Plastid</keyword>
<keyword id="KW-0630">Potassium</keyword>
<keyword id="KW-0670">Pyruvate</keyword>
<keyword id="KW-0786">Thiamine pyrophosphate</keyword>
<protein>
    <recommendedName>
        <fullName>Pyruvate dehydrogenase E1 component subunit beta</fullName>
        <ecNumber>1.2.4.1</ecNumber>
    </recommendedName>
</protein>
<dbReference type="EC" id="1.2.4.1"/>
<dbReference type="EMBL" id="U38804">
    <property type="protein sequence ID" value="AAC08152.1"/>
    <property type="molecule type" value="Genomic_DNA"/>
</dbReference>
<dbReference type="PIR" id="S73187">
    <property type="entry name" value="S73187"/>
</dbReference>
<dbReference type="RefSeq" id="NP_053876.1">
    <property type="nucleotide sequence ID" value="NC_000925.1"/>
</dbReference>
<dbReference type="SMR" id="P51266"/>
<dbReference type="GeneID" id="809895"/>
<dbReference type="GO" id="GO:0009507">
    <property type="term" value="C:chloroplast"/>
    <property type="evidence" value="ECO:0007669"/>
    <property type="project" value="UniProtKB-SubCell"/>
</dbReference>
<dbReference type="GO" id="GO:0046872">
    <property type="term" value="F:metal ion binding"/>
    <property type="evidence" value="ECO:0007669"/>
    <property type="project" value="UniProtKB-KW"/>
</dbReference>
<dbReference type="GO" id="GO:0004739">
    <property type="term" value="F:pyruvate dehydrogenase (acetyl-transferring) activity"/>
    <property type="evidence" value="ECO:0007669"/>
    <property type="project" value="UniProtKB-EC"/>
</dbReference>
<dbReference type="CDD" id="cd07036">
    <property type="entry name" value="TPP_PYR_E1-PDHc-beta_like"/>
    <property type="match status" value="1"/>
</dbReference>
<dbReference type="FunFam" id="3.40.50.920:FF:000001">
    <property type="entry name" value="Pyruvate dehydrogenase E1 beta subunit"/>
    <property type="match status" value="1"/>
</dbReference>
<dbReference type="FunFam" id="3.40.50.970:FF:000001">
    <property type="entry name" value="Pyruvate dehydrogenase E1 beta subunit"/>
    <property type="match status" value="1"/>
</dbReference>
<dbReference type="Gene3D" id="3.40.50.920">
    <property type="match status" value="1"/>
</dbReference>
<dbReference type="Gene3D" id="3.40.50.970">
    <property type="match status" value="1"/>
</dbReference>
<dbReference type="InterPro" id="IPR029061">
    <property type="entry name" value="THDP-binding"/>
</dbReference>
<dbReference type="InterPro" id="IPR009014">
    <property type="entry name" value="Transketo_C/PFOR_II"/>
</dbReference>
<dbReference type="InterPro" id="IPR005475">
    <property type="entry name" value="Transketolase-like_Pyr-bd"/>
</dbReference>
<dbReference type="InterPro" id="IPR033248">
    <property type="entry name" value="Transketolase_C"/>
</dbReference>
<dbReference type="NCBIfam" id="NF006667">
    <property type="entry name" value="PRK09212.1"/>
    <property type="match status" value="1"/>
</dbReference>
<dbReference type="PANTHER" id="PTHR43257">
    <property type="entry name" value="PYRUVATE DEHYDROGENASE E1 COMPONENT BETA SUBUNIT"/>
    <property type="match status" value="1"/>
</dbReference>
<dbReference type="PANTHER" id="PTHR43257:SF2">
    <property type="entry name" value="PYRUVATE DEHYDROGENASE E1 COMPONENT SUBUNIT BETA"/>
    <property type="match status" value="1"/>
</dbReference>
<dbReference type="Pfam" id="PF02779">
    <property type="entry name" value="Transket_pyr"/>
    <property type="match status" value="1"/>
</dbReference>
<dbReference type="Pfam" id="PF02780">
    <property type="entry name" value="Transketolase_C"/>
    <property type="match status" value="1"/>
</dbReference>
<dbReference type="SMART" id="SM00861">
    <property type="entry name" value="Transket_pyr"/>
    <property type="match status" value="1"/>
</dbReference>
<dbReference type="SUPFAM" id="SSF52518">
    <property type="entry name" value="Thiamin diphosphate-binding fold (THDP-binding)"/>
    <property type="match status" value="1"/>
</dbReference>
<dbReference type="SUPFAM" id="SSF52922">
    <property type="entry name" value="TK C-terminal domain-like"/>
    <property type="match status" value="1"/>
</dbReference>
<proteinExistence type="inferred from homology"/>
<name>ODPB_PORPU</name>
<comment type="function">
    <text evidence="1">The pyruvate dehydrogenase complex catalyzes the overall conversion of pyruvate to acetyl-CoA and CO(2). It contains multiple copies of three enzymatic components: pyruvate dehydrogenase (E1), dihydrolipoamide acetyltransferase (E2) and lipoamide dehydrogenase (E3) (By similarity).</text>
</comment>
<comment type="catalytic activity">
    <reaction>
        <text>N(6)-[(R)-lipoyl]-L-lysyl-[protein] + pyruvate + H(+) = N(6)-[(R)-S(8)-acetyldihydrolipoyl]-L-lysyl-[protein] + CO2</text>
        <dbReference type="Rhea" id="RHEA:19189"/>
        <dbReference type="Rhea" id="RHEA-COMP:10474"/>
        <dbReference type="Rhea" id="RHEA-COMP:10478"/>
        <dbReference type="ChEBI" id="CHEBI:15361"/>
        <dbReference type="ChEBI" id="CHEBI:15378"/>
        <dbReference type="ChEBI" id="CHEBI:16526"/>
        <dbReference type="ChEBI" id="CHEBI:83099"/>
        <dbReference type="ChEBI" id="CHEBI:83111"/>
        <dbReference type="EC" id="1.2.4.1"/>
    </reaction>
</comment>
<comment type="cofactor">
    <cofactor evidence="2">
        <name>thiamine diphosphate</name>
        <dbReference type="ChEBI" id="CHEBI:58937"/>
    </cofactor>
</comment>
<comment type="subunit">
    <text evidence="1">Heterodimer of an alpha and a beta chain.</text>
</comment>
<comment type="subcellular location">
    <subcellularLocation>
        <location>Plastid</location>
        <location>Chloroplast</location>
    </subcellularLocation>
</comment>
<organism>
    <name type="scientific">Porphyra purpurea</name>
    <name type="common">Red seaweed</name>
    <name type="synonym">Ulva purpurea</name>
    <dbReference type="NCBI Taxonomy" id="2787"/>
    <lineage>
        <taxon>Eukaryota</taxon>
        <taxon>Rhodophyta</taxon>
        <taxon>Bangiophyceae</taxon>
        <taxon>Bangiales</taxon>
        <taxon>Bangiaceae</taxon>
        <taxon>Porphyra</taxon>
    </lineage>
</organism>
<geneLocation type="chloroplast"/>
<sequence length="331" mass="36394">MSKVFMFDALRAATDEEMEKDLTVCVIGEDVGHYGGSYKVTKDLHSKYGDLRVLDTPIAENSFTGMAIGAAITGLRPIVEGMNMSFLLLAFNQISNNAGMLRYTSGGNFTLPLVIRGPGGVGRQLGAEHSQRLEAYFQAIPGLKIVACSTPYNAKGLLKSAIRDNNPVVFFEHVLLYNLQEEIPEDEYLIPLDKAEVVRKGKDITILTYSRMRHHVTEALPLLLNDGYDPEVLDLISLKPLDIDSISVSVKKTHRVLIVEECMKTAGIGAELIAQINEHLFDELDAPVVRLSSQDIPTPYNGSLEQATVIQPHQIIDAVKNIVNSSKTITT</sequence>
<gene>
    <name type="primary">pdhB</name>
    <name type="synonym">odpB</name>
</gene>